<organism>
    <name type="scientific">Shewanella putrefaciens (strain CN-32 / ATCC BAA-453)</name>
    <dbReference type="NCBI Taxonomy" id="319224"/>
    <lineage>
        <taxon>Bacteria</taxon>
        <taxon>Pseudomonadati</taxon>
        <taxon>Pseudomonadota</taxon>
        <taxon>Gammaproteobacteria</taxon>
        <taxon>Alteromonadales</taxon>
        <taxon>Shewanellaceae</taxon>
        <taxon>Shewanella</taxon>
    </lineage>
</organism>
<keyword id="KW-0012">Acyltransferase</keyword>
<keyword id="KW-0963">Cytoplasm</keyword>
<keyword id="KW-0408">Iron</keyword>
<keyword id="KW-0479">Metal-binding</keyword>
<keyword id="KW-0808">Transferase</keyword>
<keyword id="KW-0819">tRNA processing</keyword>
<evidence type="ECO:0000255" key="1">
    <source>
        <dbReference type="HAMAP-Rule" id="MF_01445"/>
    </source>
</evidence>
<protein>
    <recommendedName>
        <fullName evidence="1">tRNA N6-adenosine threonylcarbamoyltransferase</fullName>
        <ecNumber evidence="1">2.3.1.234</ecNumber>
    </recommendedName>
    <alternativeName>
        <fullName evidence="1">N6-L-threonylcarbamoyladenine synthase</fullName>
        <shortName evidence="1">t(6)A synthase</shortName>
    </alternativeName>
    <alternativeName>
        <fullName evidence="1">t(6)A37 threonylcarbamoyladenosine biosynthesis protein TsaD</fullName>
    </alternativeName>
    <alternativeName>
        <fullName evidence="1">tRNA threonylcarbamoyladenosine biosynthesis protein TsaD</fullName>
    </alternativeName>
</protein>
<dbReference type="EC" id="2.3.1.234" evidence="1"/>
<dbReference type="EMBL" id="CP000681">
    <property type="protein sequence ID" value="ABP74836.1"/>
    <property type="molecule type" value="Genomic_DNA"/>
</dbReference>
<dbReference type="SMR" id="A4Y4F3"/>
<dbReference type="STRING" id="319224.Sputcn32_1108"/>
<dbReference type="KEGG" id="spc:Sputcn32_1108"/>
<dbReference type="eggNOG" id="COG0533">
    <property type="taxonomic scope" value="Bacteria"/>
</dbReference>
<dbReference type="HOGENOM" id="CLU_023208_0_0_6"/>
<dbReference type="GO" id="GO:0005737">
    <property type="term" value="C:cytoplasm"/>
    <property type="evidence" value="ECO:0007669"/>
    <property type="project" value="UniProtKB-SubCell"/>
</dbReference>
<dbReference type="GO" id="GO:0005506">
    <property type="term" value="F:iron ion binding"/>
    <property type="evidence" value="ECO:0007669"/>
    <property type="project" value="UniProtKB-UniRule"/>
</dbReference>
<dbReference type="GO" id="GO:0061711">
    <property type="term" value="F:N(6)-L-threonylcarbamoyladenine synthase activity"/>
    <property type="evidence" value="ECO:0007669"/>
    <property type="project" value="UniProtKB-EC"/>
</dbReference>
<dbReference type="GO" id="GO:0002949">
    <property type="term" value="P:tRNA threonylcarbamoyladenosine modification"/>
    <property type="evidence" value="ECO:0007669"/>
    <property type="project" value="UniProtKB-UniRule"/>
</dbReference>
<dbReference type="CDD" id="cd24133">
    <property type="entry name" value="ASKHA_NBD_TsaD_bac"/>
    <property type="match status" value="1"/>
</dbReference>
<dbReference type="FunFam" id="3.30.420.40:FF:000031">
    <property type="entry name" value="tRNA N6-adenosine threonylcarbamoyltransferase"/>
    <property type="match status" value="1"/>
</dbReference>
<dbReference type="Gene3D" id="3.30.420.40">
    <property type="match status" value="2"/>
</dbReference>
<dbReference type="HAMAP" id="MF_01445">
    <property type="entry name" value="TsaD"/>
    <property type="match status" value="1"/>
</dbReference>
<dbReference type="InterPro" id="IPR043129">
    <property type="entry name" value="ATPase_NBD"/>
</dbReference>
<dbReference type="InterPro" id="IPR000905">
    <property type="entry name" value="Gcp-like_dom"/>
</dbReference>
<dbReference type="InterPro" id="IPR017861">
    <property type="entry name" value="KAE1/TsaD"/>
</dbReference>
<dbReference type="InterPro" id="IPR017860">
    <property type="entry name" value="Peptidase_M22_CS"/>
</dbReference>
<dbReference type="InterPro" id="IPR022450">
    <property type="entry name" value="TsaD"/>
</dbReference>
<dbReference type="NCBIfam" id="TIGR00329">
    <property type="entry name" value="gcp_kae1"/>
    <property type="match status" value="1"/>
</dbReference>
<dbReference type="NCBIfam" id="TIGR03723">
    <property type="entry name" value="T6A_TsaD_YgjD"/>
    <property type="match status" value="1"/>
</dbReference>
<dbReference type="PANTHER" id="PTHR11735">
    <property type="entry name" value="TRNA N6-ADENOSINE THREONYLCARBAMOYLTRANSFERASE"/>
    <property type="match status" value="1"/>
</dbReference>
<dbReference type="PANTHER" id="PTHR11735:SF6">
    <property type="entry name" value="TRNA N6-ADENOSINE THREONYLCARBAMOYLTRANSFERASE, MITOCHONDRIAL"/>
    <property type="match status" value="1"/>
</dbReference>
<dbReference type="Pfam" id="PF00814">
    <property type="entry name" value="TsaD"/>
    <property type="match status" value="1"/>
</dbReference>
<dbReference type="PRINTS" id="PR00789">
    <property type="entry name" value="OSIALOPTASE"/>
</dbReference>
<dbReference type="SUPFAM" id="SSF53067">
    <property type="entry name" value="Actin-like ATPase domain"/>
    <property type="match status" value="2"/>
</dbReference>
<dbReference type="PROSITE" id="PS01016">
    <property type="entry name" value="GLYCOPROTEASE"/>
    <property type="match status" value="1"/>
</dbReference>
<reference key="1">
    <citation type="submission" date="2007-04" db="EMBL/GenBank/DDBJ databases">
        <title>Complete sequence of Shewanella putrefaciens CN-32.</title>
        <authorList>
            <consortium name="US DOE Joint Genome Institute"/>
            <person name="Copeland A."/>
            <person name="Lucas S."/>
            <person name="Lapidus A."/>
            <person name="Barry K."/>
            <person name="Detter J.C."/>
            <person name="Glavina del Rio T."/>
            <person name="Hammon N."/>
            <person name="Israni S."/>
            <person name="Dalin E."/>
            <person name="Tice H."/>
            <person name="Pitluck S."/>
            <person name="Chain P."/>
            <person name="Malfatti S."/>
            <person name="Shin M."/>
            <person name="Vergez L."/>
            <person name="Schmutz J."/>
            <person name="Larimer F."/>
            <person name="Land M."/>
            <person name="Hauser L."/>
            <person name="Kyrpides N."/>
            <person name="Mikhailova N."/>
            <person name="Romine M.F."/>
            <person name="Fredrickson J."/>
            <person name="Tiedje J."/>
            <person name="Richardson P."/>
        </authorList>
    </citation>
    <scope>NUCLEOTIDE SEQUENCE [LARGE SCALE GENOMIC DNA]</scope>
    <source>
        <strain>CN-32 / ATCC BAA-453</strain>
    </source>
</reference>
<feature type="chain" id="PRO_1000024453" description="tRNA N6-adenosine threonylcarbamoyltransferase">
    <location>
        <begin position="1"/>
        <end position="338"/>
    </location>
</feature>
<feature type="binding site" evidence="1">
    <location>
        <position position="111"/>
    </location>
    <ligand>
        <name>Fe cation</name>
        <dbReference type="ChEBI" id="CHEBI:24875"/>
    </ligand>
</feature>
<feature type="binding site" evidence="1">
    <location>
        <position position="115"/>
    </location>
    <ligand>
        <name>Fe cation</name>
        <dbReference type="ChEBI" id="CHEBI:24875"/>
    </ligand>
</feature>
<feature type="binding site" evidence="1">
    <location>
        <begin position="134"/>
        <end position="138"/>
    </location>
    <ligand>
        <name>substrate</name>
    </ligand>
</feature>
<feature type="binding site" evidence="1">
    <location>
        <position position="167"/>
    </location>
    <ligand>
        <name>substrate</name>
    </ligand>
</feature>
<feature type="binding site" evidence="1">
    <location>
        <position position="180"/>
    </location>
    <ligand>
        <name>substrate</name>
    </ligand>
</feature>
<feature type="binding site" evidence="1">
    <location>
        <position position="272"/>
    </location>
    <ligand>
        <name>substrate</name>
    </ligand>
</feature>
<feature type="binding site" evidence="1">
    <location>
        <position position="300"/>
    </location>
    <ligand>
        <name>Fe cation</name>
        <dbReference type="ChEBI" id="CHEBI:24875"/>
    </ligand>
</feature>
<sequence length="338" mass="36148">MRVLGIETSCDETGIAVYDDKLGLLSHALYSQVKLHADYGGVVPELASRDHVRKIVPLIRQALKNADTKIADLDGIAYTKGPGLIGALLVGACVGRSLAFAWNKPAIGVHHMEGHLLAPMLEEDAPEFPFVALLVSGGHSMLVKVDGIGLYEVLGESVDDAAGEAFDKTAKLMGLDYPGGPRLAKLAATGVPAGYQFPRPMTDRPGLDFSFSGLKTFTANTIAAEPDDEQTRANIARAFEEAVVDTLAIKCRRALKLTGYNRLVIAGGVSANTRLRATLAEVMTSIGGKVYYPRGEFCTDNGAMIAYAGLQRLKAGQREDLAVKGQPRWPLDTLPPLF</sequence>
<comment type="function">
    <text evidence="1">Required for the formation of a threonylcarbamoyl group on adenosine at position 37 (t(6)A37) in tRNAs that read codons beginning with adenine. Is involved in the transfer of the threonylcarbamoyl moiety of threonylcarbamoyl-AMP (TC-AMP) to the N6 group of A37, together with TsaE and TsaB. TsaD likely plays a direct catalytic role in this reaction.</text>
</comment>
<comment type="catalytic activity">
    <reaction evidence="1">
        <text>L-threonylcarbamoyladenylate + adenosine(37) in tRNA = N(6)-L-threonylcarbamoyladenosine(37) in tRNA + AMP + H(+)</text>
        <dbReference type="Rhea" id="RHEA:37059"/>
        <dbReference type="Rhea" id="RHEA-COMP:10162"/>
        <dbReference type="Rhea" id="RHEA-COMP:10163"/>
        <dbReference type="ChEBI" id="CHEBI:15378"/>
        <dbReference type="ChEBI" id="CHEBI:73682"/>
        <dbReference type="ChEBI" id="CHEBI:74411"/>
        <dbReference type="ChEBI" id="CHEBI:74418"/>
        <dbReference type="ChEBI" id="CHEBI:456215"/>
        <dbReference type="EC" id="2.3.1.234"/>
    </reaction>
</comment>
<comment type="cofactor">
    <cofactor evidence="1">
        <name>Fe(2+)</name>
        <dbReference type="ChEBI" id="CHEBI:29033"/>
    </cofactor>
    <text evidence="1">Binds 1 Fe(2+) ion per subunit.</text>
</comment>
<comment type="subcellular location">
    <subcellularLocation>
        <location evidence="1">Cytoplasm</location>
    </subcellularLocation>
</comment>
<comment type="similarity">
    <text evidence="1">Belongs to the KAE1 / TsaD family.</text>
</comment>
<accession>A4Y4F3</accession>
<name>TSAD_SHEPC</name>
<proteinExistence type="inferred from homology"/>
<gene>
    <name evidence="1" type="primary">tsaD</name>
    <name type="synonym">gcp</name>
    <name type="ordered locus">Sputcn32_1108</name>
</gene>